<evidence type="ECO:0000250" key="1"/>
<evidence type="ECO:0000255" key="2">
    <source>
        <dbReference type="PROSITE-ProRule" id="PRU00701"/>
    </source>
</evidence>
<evidence type="ECO:0000255" key="3">
    <source>
        <dbReference type="PROSITE-ProRule" id="PRU00702"/>
    </source>
</evidence>
<evidence type="ECO:0000256" key="4">
    <source>
        <dbReference type="SAM" id="MobiDB-lite"/>
    </source>
</evidence>
<evidence type="ECO:0000305" key="5"/>
<feature type="chain" id="PRO_0000330802" description="Transcription factor CYCLOIDEA">
    <location>
        <begin position="1" status="less than"/>
        <end position="271" status="greater than"/>
    </location>
</feature>
<feature type="domain" description="TCP" evidence="2">
    <location>
        <begin position="79"/>
        <end position="137"/>
    </location>
</feature>
<feature type="domain" description="R" evidence="3">
    <location>
        <begin position="192"/>
        <end position="209"/>
    </location>
</feature>
<feature type="region of interest" description="Disordered" evidence="4">
    <location>
        <begin position="64"/>
        <end position="85"/>
    </location>
</feature>
<feature type="sequence conflict" description="In Ref. 1; AAF07228." evidence="5" ref="1">
    <original>M</original>
    <variation>T</variation>
    <location>
        <position position="113"/>
    </location>
</feature>
<feature type="sequence conflict" description="In Ref. 1; AAF07227." evidence="5" ref="1">
    <original>S</original>
    <variation>L</variation>
    <location>
        <position position="130"/>
    </location>
</feature>
<feature type="sequence conflict" description="In Ref. 1; AAF07228." evidence="5" ref="1">
    <original>E</original>
    <variation>G</variation>
    <location>
        <position position="217"/>
    </location>
</feature>
<feature type="sequence conflict" description="In Ref. 1; AAF07228." evidence="5" ref="1">
    <original>F</original>
    <variation>S</variation>
    <location>
        <position position="226"/>
    </location>
</feature>
<feature type="non-terminal residue">
    <location>
        <position position="1"/>
    </location>
</feature>
<feature type="non-terminal residue">
    <location>
        <position position="271"/>
    </location>
</feature>
<reference key="1">
    <citation type="journal article" date="1999" name="Mol. Biol. Evol.">
        <title>Evolution of the cycloidea gene family in Antirrhinum and Misopates.</title>
        <authorList>
            <person name="Vieira C.P."/>
            <person name="Vieira J."/>
            <person name="Charlesworth D."/>
        </authorList>
    </citation>
    <scope>NUCLEOTIDE SEQUENCE [GENOMIC DNA]</scope>
</reference>
<reference key="2">
    <citation type="journal article" date="2003" name="Mol. Biol. Evol.">
        <title>Rapid molecular evolution of CYCLOIDEA-like genes in Antirrhinum and its relatives.</title>
        <authorList>
            <person name="Guebitz T."/>
            <person name="Caldwell A."/>
            <person name="Hudson A."/>
        </authorList>
    </citation>
    <scope>NUCLEOTIDE SEQUENCE [GENOMIC DNA] OF 14-262</scope>
</reference>
<organism>
    <name type="scientific">Antirrhinum linkianum</name>
    <name type="common">Snapdragon</name>
    <name type="synonym">Antirrhinum majus subsp. linkianum</name>
    <dbReference type="NCBI Taxonomy" id="102601"/>
    <lineage>
        <taxon>Eukaryota</taxon>
        <taxon>Viridiplantae</taxon>
        <taxon>Streptophyta</taxon>
        <taxon>Embryophyta</taxon>
        <taxon>Tracheophyta</taxon>
        <taxon>Spermatophyta</taxon>
        <taxon>Magnoliopsida</taxon>
        <taxon>eudicotyledons</taxon>
        <taxon>Gunneridae</taxon>
        <taxon>Pentapetalae</taxon>
        <taxon>asterids</taxon>
        <taxon>lamiids</taxon>
        <taxon>Lamiales</taxon>
        <taxon>Plantaginaceae</taxon>
        <taxon>Antirrhineae</taxon>
        <taxon>Antirrhinum</taxon>
    </lineage>
</organism>
<name>CYCLD_ANTLN</name>
<proteinExistence type="inferred from homology"/>
<protein>
    <recommendedName>
        <fullName>Transcription factor CYCLOIDEA</fullName>
    </recommendedName>
</protein>
<gene>
    <name type="primary">CYC</name>
    <name type="synonym">CYC1A</name>
</gene>
<dbReference type="EMBL" id="AF146836">
    <property type="protein sequence ID" value="AAF07227.1"/>
    <property type="molecule type" value="Genomic_DNA"/>
</dbReference>
<dbReference type="EMBL" id="AF146837">
    <property type="protein sequence ID" value="AAF07228.1"/>
    <property type="molecule type" value="Genomic_DNA"/>
</dbReference>
<dbReference type="EMBL" id="AF146838">
    <property type="protein sequence ID" value="AAF07229.1"/>
    <property type="molecule type" value="Genomic_DNA"/>
</dbReference>
<dbReference type="EMBL" id="AY316722">
    <property type="protein sequence ID" value="AAP84119.1"/>
    <property type="molecule type" value="Genomic_DNA"/>
</dbReference>
<dbReference type="SMR" id="Q9SBV6"/>
<dbReference type="GO" id="GO:0005634">
    <property type="term" value="C:nucleus"/>
    <property type="evidence" value="ECO:0007669"/>
    <property type="project" value="UniProtKB-SubCell"/>
</dbReference>
<dbReference type="GO" id="GO:0003700">
    <property type="term" value="F:DNA-binding transcription factor activity"/>
    <property type="evidence" value="ECO:0007669"/>
    <property type="project" value="InterPro"/>
</dbReference>
<dbReference type="GO" id="GO:0043565">
    <property type="term" value="F:sequence-specific DNA binding"/>
    <property type="evidence" value="ECO:0007669"/>
    <property type="project" value="TreeGrafter"/>
</dbReference>
<dbReference type="GO" id="GO:2000032">
    <property type="term" value="P:regulation of secondary shoot formation"/>
    <property type="evidence" value="ECO:0007669"/>
    <property type="project" value="TreeGrafter"/>
</dbReference>
<dbReference type="InterPro" id="IPR017888">
    <property type="entry name" value="CYC/TB1_R_domain"/>
</dbReference>
<dbReference type="InterPro" id="IPR017887">
    <property type="entry name" value="TF_TCP_subgr"/>
</dbReference>
<dbReference type="InterPro" id="IPR005333">
    <property type="entry name" value="Transcription_factor_TCP"/>
</dbReference>
<dbReference type="PANTHER" id="PTHR31072:SF224">
    <property type="entry name" value="TRANSCRIPTION FACTOR TCP1"/>
    <property type="match status" value="1"/>
</dbReference>
<dbReference type="PANTHER" id="PTHR31072">
    <property type="entry name" value="TRANSCRIPTION FACTOR TCP4-RELATED"/>
    <property type="match status" value="1"/>
</dbReference>
<dbReference type="Pfam" id="PF03634">
    <property type="entry name" value="TCP"/>
    <property type="match status" value="1"/>
</dbReference>
<dbReference type="PROSITE" id="PS51370">
    <property type="entry name" value="R"/>
    <property type="match status" value="1"/>
</dbReference>
<dbReference type="PROSITE" id="PS51369">
    <property type="entry name" value="TCP"/>
    <property type="match status" value="1"/>
</dbReference>
<sequence length="271" mass="30348">HLPQVSSSLHSRAATSVVDLNGNEIQLHDMLSGHYLTTANAPVLESTALFNNNNNFNHDVVNGLNRDPSPTFPTKQAVKKDRHSKIYTSQGPRDRRVRLSIGIARKFFDLQEMLGFDKPSKTLDWLLTKSKTAIKELVQSKSTKSNSSSPCDDCEEVVSVDSENVTDHSKGKSLKANNKCKEAMDSHQAAAKESRAKARARARERTKEKMCIKQLNEAIVLRNHQFEVSGTREAFVHPVFGFHQQNYGNTSHENWDQSNFASQSNQLCAIL</sequence>
<comment type="function">
    <text evidence="1">Involved in the dorsovental asymmetry of flowers. Retards growth rate and reduces organ number in the dorsal region of flowers (By similarity).</text>
</comment>
<comment type="subcellular location">
    <subcellularLocation>
        <location evidence="5">Nucleus</location>
    </subcellularLocation>
</comment>
<accession>Q9SBV6</accession>
<accession>Q7XJF7</accession>
<accession>Q9SBV7</accession>
<accession>Q9SBV8</accession>
<keyword id="KW-0217">Developmental protein</keyword>
<keyword id="KW-0238">DNA-binding</keyword>
<keyword id="KW-0539">Nucleus</keyword>
<keyword id="KW-0804">Transcription</keyword>
<keyword id="KW-0805">Transcription regulation</keyword>